<keyword id="KW-0012">Acyltransferase</keyword>
<keyword id="KW-0963">Cytoplasm</keyword>
<keyword id="KW-0441">Lipid A biosynthesis</keyword>
<keyword id="KW-0444">Lipid biosynthesis</keyword>
<keyword id="KW-0443">Lipid metabolism</keyword>
<keyword id="KW-0677">Repeat</keyword>
<keyword id="KW-0808">Transferase</keyword>
<accession>B2T5I2</accession>
<proteinExistence type="inferred from homology"/>
<name>LPXA_PARPJ</name>
<sequence>MSRIHPTAIVEPGAQLDESVEVGPYAVIGAHVTIGARTTVGSHSVIEGHTTLGEDNRIGHYASVGGRPQDMKYKDEPTRLVIGNRNTIREFTTIHTGTMQDAGVTTLGDDNWIMAYVHIGHDCHVGSNVILSSNAQMAGHVTIGDHAIVGGMSGVHQFVRIGAHSMLGGASALVQDIPPFVIAAGNKAEPHGINVEGLRRRGFSPDAISALRAAYRVLYKNGLSLEEAKVQLRELATAGGDGDAPVQTLLAFVEASQRGIIR</sequence>
<dbReference type="EC" id="2.3.1.129" evidence="1"/>
<dbReference type="EMBL" id="CP001052">
    <property type="protein sequence ID" value="ACD16839.1"/>
    <property type="molecule type" value="Genomic_DNA"/>
</dbReference>
<dbReference type="RefSeq" id="WP_012433436.1">
    <property type="nucleotide sequence ID" value="NC_010681.1"/>
</dbReference>
<dbReference type="SMR" id="B2T5I2"/>
<dbReference type="STRING" id="398527.Bphyt_2443"/>
<dbReference type="GeneID" id="97307458"/>
<dbReference type="KEGG" id="bpy:Bphyt_2443"/>
<dbReference type="eggNOG" id="COG1043">
    <property type="taxonomic scope" value="Bacteria"/>
</dbReference>
<dbReference type="HOGENOM" id="CLU_061249_0_0_4"/>
<dbReference type="OrthoDB" id="9807278at2"/>
<dbReference type="UniPathway" id="UPA00359">
    <property type="reaction ID" value="UER00477"/>
</dbReference>
<dbReference type="Proteomes" id="UP000001739">
    <property type="component" value="Chromosome 1"/>
</dbReference>
<dbReference type="GO" id="GO:0005737">
    <property type="term" value="C:cytoplasm"/>
    <property type="evidence" value="ECO:0007669"/>
    <property type="project" value="UniProtKB-SubCell"/>
</dbReference>
<dbReference type="GO" id="GO:0016020">
    <property type="term" value="C:membrane"/>
    <property type="evidence" value="ECO:0007669"/>
    <property type="project" value="GOC"/>
</dbReference>
<dbReference type="GO" id="GO:0008780">
    <property type="term" value="F:acyl-[acyl-carrier-protein]-UDP-N-acetylglucosamine O-acyltransferase activity"/>
    <property type="evidence" value="ECO:0007669"/>
    <property type="project" value="UniProtKB-UniRule"/>
</dbReference>
<dbReference type="GO" id="GO:0009245">
    <property type="term" value="P:lipid A biosynthetic process"/>
    <property type="evidence" value="ECO:0007669"/>
    <property type="project" value="UniProtKB-UniRule"/>
</dbReference>
<dbReference type="CDD" id="cd03351">
    <property type="entry name" value="LbH_UDP-GlcNAc_AT"/>
    <property type="match status" value="1"/>
</dbReference>
<dbReference type="Gene3D" id="2.160.10.10">
    <property type="entry name" value="Hexapeptide repeat proteins"/>
    <property type="match status" value="1"/>
</dbReference>
<dbReference type="Gene3D" id="1.20.1180.10">
    <property type="entry name" value="Udp N-acetylglucosamine O-acyltransferase, C-terminal domain"/>
    <property type="match status" value="1"/>
</dbReference>
<dbReference type="HAMAP" id="MF_00387">
    <property type="entry name" value="LpxA"/>
    <property type="match status" value="1"/>
</dbReference>
<dbReference type="InterPro" id="IPR029098">
    <property type="entry name" value="Acetyltransf_C"/>
</dbReference>
<dbReference type="InterPro" id="IPR037157">
    <property type="entry name" value="Acetyltransf_C_sf"/>
</dbReference>
<dbReference type="InterPro" id="IPR001451">
    <property type="entry name" value="Hexapep"/>
</dbReference>
<dbReference type="InterPro" id="IPR010137">
    <property type="entry name" value="Lipid_A_LpxA"/>
</dbReference>
<dbReference type="InterPro" id="IPR011004">
    <property type="entry name" value="Trimer_LpxA-like_sf"/>
</dbReference>
<dbReference type="NCBIfam" id="TIGR01852">
    <property type="entry name" value="lipid_A_lpxA"/>
    <property type="match status" value="1"/>
</dbReference>
<dbReference type="NCBIfam" id="NF003657">
    <property type="entry name" value="PRK05289.1"/>
    <property type="match status" value="1"/>
</dbReference>
<dbReference type="PANTHER" id="PTHR43480">
    <property type="entry name" value="ACYL-[ACYL-CARRIER-PROTEIN]--UDP-N-ACETYLGLUCOSAMINE O-ACYLTRANSFERASE"/>
    <property type="match status" value="1"/>
</dbReference>
<dbReference type="PANTHER" id="PTHR43480:SF1">
    <property type="entry name" value="ACYL-[ACYL-CARRIER-PROTEIN]--UDP-N-ACETYLGLUCOSAMINE O-ACYLTRANSFERASE, MITOCHONDRIAL-RELATED"/>
    <property type="match status" value="1"/>
</dbReference>
<dbReference type="Pfam" id="PF13720">
    <property type="entry name" value="Acetyltransf_11"/>
    <property type="match status" value="1"/>
</dbReference>
<dbReference type="Pfam" id="PF00132">
    <property type="entry name" value="Hexapep"/>
    <property type="match status" value="1"/>
</dbReference>
<dbReference type="PIRSF" id="PIRSF000456">
    <property type="entry name" value="UDP-GlcNAc_acltr"/>
    <property type="match status" value="1"/>
</dbReference>
<dbReference type="SUPFAM" id="SSF51161">
    <property type="entry name" value="Trimeric LpxA-like enzymes"/>
    <property type="match status" value="1"/>
</dbReference>
<dbReference type="PROSITE" id="PS00101">
    <property type="entry name" value="HEXAPEP_TRANSFERASES"/>
    <property type="match status" value="1"/>
</dbReference>
<comment type="function">
    <text evidence="1">Involved in the biosynthesis of lipid A, a phosphorylated glycolipid that anchors the lipopolysaccharide to the outer membrane of the cell.</text>
</comment>
<comment type="catalytic activity">
    <reaction evidence="1">
        <text>a (3R)-hydroxyacyl-[ACP] + UDP-N-acetyl-alpha-D-glucosamine = a UDP-3-O-[(3R)-3-hydroxyacyl]-N-acetyl-alpha-D-glucosamine + holo-[ACP]</text>
        <dbReference type="Rhea" id="RHEA:67812"/>
        <dbReference type="Rhea" id="RHEA-COMP:9685"/>
        <dbReference type="Rhea" id="RHEA-COMP:9945"/>
        <dbReference type="ChEBI" id="CHEBI:57705"/>
        <dbReference type="ChEBI" id="CHEBI:64479"/>
        <dbReference type="ChEBI" id="CHEBI:78827"/>
        <dbReference type="ChEBI" id="CHEBI:173225"/>
        <dbReference type="EC" id="2.3.1.129"/>
    </reaction>
</comment>
<comment type="pathway">
    <text evidence="1">Glycolipid biosynthesis; lipid IV(A) biosynthesis; lipid IV(A) from (3R)-3-hydroxytetradecanoyl-[acyl-carrier-protein] and UDP-N-acetyl-alpha-D-glucosamine: step 1/6.</text>
</comment>
<comment type="subunit">
    <text evidence="1">Homotrimer.</text>
</comment>
<comment type="subcellular location">
    <subcellularLocation>
        <location evidence="1">Cytoplasm</location>
    </subcellularLocation>
</comment>
<comment type="similarity">
    <text evidence="1">Belongs to the transferase hexapeptide repeat family. LpxA subfamily.</text>
</comment>
<protein>
    <recommendedName>
        <fullName evidence="1">Acyl-[acyl-carrier-protein]--UDP-N-acetylglucosamine O-acyltransferase</fullName>
        <shortName evidence="1">UDP-N-acetylglucosamine acyltransferase</shortName>
        <ecNumber evidence="1">2.3.1.129</ecNumber>
    </recommendedName>
</protein>
<organism>
    <name type="scientific">Paraburkholderia phytofirmans (strain DSM 17436 / LMG 22146 / PsJN)</name>
    <name type="common">Burkholderia phytofirmans</name>
    <dbReference type="NCBI Taxonomy" id="398527"/>
    <lineage>
        <taxon>Bacteria</taxon>
        <taxon>Pseudomonadati</taxon>
        <taxon>Pseudomonadota</taxon>
        <taxon>Betaproteobacteria</taxon>
        <taxon>Burkholderiales</taxon>
        <taxon>Burkholderiaceae</taxon>
        <taxon>Paraburkholderia</taxon>
    </lineage>
</organism>
<feature type="chain" id="PRO_1000122692" description="Acyl-[acyl-carrier-protein]--UDP-N-acetylglucosamine O-acyltransferase">
    <location>
        <begin position="1"/>
        <end position="262"/>
    </location>
</feature>
<evidence type="ECO:0000255" key="1">
    <source>
        <dbReference type="HAMAP-Rule" id="MF_00387"/>
    </source>
</evidence>
<gene>
    <name evidence="1" type="primary">lpxA</name>
    <name type="ordered locus">Bphyt_2443</name>
</gene>
<reference key="1">
    <citation type="journal article" date="2011" name="J. Bacteriol.">
        <title>Complete genome sequence of the plant growth-promoting endophyte Burkholderia phytofirmans strain PsJN.</title>
        <authorList>
            <person name="Weilharter A."/>
            <person name="Mitter B."/>
            <person name="Shin M.V."/>
            <person name="Chain P.S."/>
            <person name="Nowak J."/>
            <person name="Sessitsch A."/>
        </authorList>
    </citation>
    <scope>NUCLEOTIDE SEQUENCE [LARGE SCALE GENOMIC DNA]</scope>
    <source>
        <strain>DSM 17436 / LMG 22146 / PsJN</strain>
    </source>
</reference>